<sequence>MSRALLFFVLAILALSAEARGPRVTDKVFFDMEIGGRPVGKIVIGLFGEVVPKTVKNFVELAQRAEGEGYVGSKFHRVIENFMIQGGDFTRGDGTGGRSIYGERFEDENFKLQHYGPGWLSMANAGEDTNGSQFFITTAKTSWLDGKHVVFGKILEGMDVVREIEATPKGAGDRPIEDVVIANAGHIPVENPFTVARAGVN</sequence>
<protein>
    <recommendedName>
        <fullName>Peptidyl-prolyl cis-trans isomerase 6</fullName>
        <shortName>PPIase 6</shortName>
        <ecNumber>5.2.1.8</ecNumber>
    </recommendedName>
    <alternativeName>
        <fullName>Cyclophilin-6</fullName>
    </alternativeName>
    <alternativeName>
        <fullName>Rotamase 6</fullName>
    </alternativeName>
</protein>
<feature type="signal peptide" evidence="1">
    <location>
        <begin position="1"/>
        <end position="16"/>
    </location>
</feature>
<feature type="chain" id="PRO_0000025496" description="Peptidyl-prolyl cis-trans isomerase 6">
    <location>
        <begin position="17"/>
        <end position="201"/>
    </location>
</feature>
<feature type="domain" description="PPIase cyclophilin-type" evidence="2">
    <location>
        <begin position="29"/>
        <end position="186"/>
    </location>
</feature>
<feature type="glycosylation site" description="N-linked (GlcNAc...) asparagine" evidence="1">
    <location>
        <position position="130"/>
    </location>
</feature>
<keyword id="KW-0325">Glycoprotein</keyword>
<keyword id="KW-0413">Isomerase</keyword>
<keyword id="KW-1185">Reference proteome</keyword>
<keyword id="KW-0697">Rotamase</keyword>
<keyword id="KW-0732">Signal</keyword>
<organism>
    <name type="scientific">Caenorhabditis elegans</name>
    <dbReference type="NCBI Taxonomy" id="6239"/>
    <lineage>
        <taxon>Eukaryota</taxon>
        <taxon>Metazoa</taxon>
        <taxon>Ecdysozoa</taxon>
        <taxon>Nematoda</taxon>
        <taxon>Chromadorea</taxon>
        <taxon>Rhabditida</taxon>
        <taxon>Rhabditina</taxon>
        <taxon>Rhabditomorpha</taxon>
        <taxon>Rhabditoidea</taxon>
        <taxon>Rhabditidae</taxon>
        <taxon>Peloderinae</taxon>
        <taxon>Caenorhabditis</taxon>
    </lineage>
</organism>
<comment type="function">
    <text>PPIases accelerate the folding of proteins. It catalyzes the cis-trans isomerization of proline imidic peptide bonds in oligopeptides.</text>
</comment>
<comment type="catalytic activity">
    <reaction>
        <text>[protein]-peptidylproline (omega=180) = [protein]-peptidylproline (omega=0)</text>
        <dbReference type="Rhea" id="RHEA:16237"/>
        <dbReference type="Rhea" id="RHEA-COMP:10747"/>
        <dbReference type="Rhea" id="RHEA-COMP:10748"/>
        <dbReference type="ChEBI" id="CHEBI:83833"/>
        <dbReference type="ChEBI" id="CHEBI:83834"/>
        <dbReference type="EC" id="5.2.1.8"/>
    </reaction>
</comment>
<comment type="similarity">
    <text evidence="3">Belongs to the cyclophilin-type PPIase family.</text>
</comment>
<accession>P52014</accession>
<proteinExistence type="evidence at transcript level"/>
<gene>
    <name type="primary">cyn-6</name>
    <name type="synonym">cyp-6</name>
    <name type="ORF">F42G9.2</name>
</gene>
<evidence type="ECO:0000255" key="1"/>
<evidence type="ECO:0000255" key="2">
    <source>
        <dbReference type="PROSITE-ProRule" id="PRU00156"/>
    </source>
</evidence>
<evidence type="ECO:0000305" key="3"/>
<name>CYP6_CAEEL</name>
<reference key="1">
    <citation type="journal article" date="1996" name="Biochem. J.">
        <title>Cloning and biochemical characterization of the cyclophilin homologues from the free-living nematode Caenorhabditis elegans.</title>
        <authorList>
            <person name="Page A.P."/>
            <person name="Macniven K."/>
            <person name="Hengartner M.O."/>
        </authorList>
    </citation>
    <scope>NUCLEOTIDE SEQUENCE [MRNA]</scope>
    <source>
        <strain>Bristol N2</strain>
    </source>
</reference>
<reference key="2">
    <citation type="journal article" date="1998" name="Science">
        <title>Genome sequence of the nematode C. elegans: a platform for investigating biology.</title>
        <authorList>
            <consortium name="The C. elegans sequencing consortium"/>
        </authorList>
    </citation>
    <scope>NUCLEOTIDE SEQUENCE [LARGE SCALE GENOMIC DNA]</scope>
    <source>
        <strain>Bristol N2</strain>
    </source>
</reference>
<dbReference type="EC" id="5.2.1.8"/>
<dbReference type="EMBL" id="U27354">
    <property type="protein sequence ID" value="AAC47124.1"/>
    <property type="molecule type" value="mRNA"/>
</dbReference>
<dbReference type="EMBL" id="FO080196">
    <property type="protein sequence ID" value="CCD61884.1"/>
    <property type="molecule type" value="Genomic_DNA"/>
</dbReference>
<dbReference type="PIR" id="T18573">
    <property type="entry name" value="T18573"/>
</dbReference>
<dbReference type="RefSeq" id="NP_497257.1">
    <property type="nucleotide sequence ID" value="NM_064856.7"/>
</dbReference>
<dbReference type="SMR" id="P52014"/>
<dbReference type="BioGRID" id="40502">
    <property type="interactions" value="14"/>
</dbReference>
<dbReference type="FunCoup" id="P52014">
    <property type="interactions" value="1503"/>
</dbReference>
<dbReference type="IntAct" id="P52014">
    <property type="interactions" value="1"/>
</dbReference>
<dbReference type="STRING" id="6239.F42G9.2.2"/>
<dbReference type="GlyCosmos" id="P52014">
    <property type="glycosylation" value="1 site, No reported glycans"/>
</dbReference>
<dbReference type="PaxDb" id="6239-F42G9.2"/>
<dbReference type="PeptideAtlas" id="P52014"/>
<dbReference type="EnsemblMetazoa" id="F42G9.2.1">
    <property type="protein sequence ID" value="F42G9.2.1"/>
    <property type="gene ID" value="WBGene00000882"/>
</dbReference>
<dbReference type="GeneID" id="175231"/>
<dbReference type="KEGG" id="cel:CELE_F42G9.2"/>
<dbReference type="UCSC" id="F42G9.2">
    <property type="organism name" value="c. elegans"/>
</dbReference>
<dbReference type="AGR" id="WB:WBGene00000882"/>
<dbReference type="CTD" id="175231"/>
<dbReference type="WormBase" id="F42G9.2">
    <property type="protein sequence ID" value="CE01301"/>
    <property type="gene ID" value="WBGene00000882"/>
    <property type="gene designation" value="cyn-6"/>
</dbReference>
<dbReference type="eggNOG" id="KOG0880">
    <property type="taxonomic scope" value="Eukaryota"/>
</dbReference>
<dbReference type="HOGENOM" id="CLU_012062_4_3_1"/>
<dbReference type="InParanoid" id="P52014"/>
<dbReference type="OMA" id="GHIPVEN"/>
<dbReference type="OrthoDB" id="193499at2759"/>
<dbReference type="PhylomeDB" id="P52014"/>
<dbReference type="BRENDA" id="5.2.1.8">
    <property type="organism ID" value="1045"/>
</dbReference>
<dbReference type="PRO" id="PR:P52014"/>
<dbReference type="Proteomes" id="UP000001940">
    <property type="component" value="Chromosome III"/>
</dbReference>
<dbReference type="Bgee" id="WBGene00000882">
    <property type="expression patterns" value="Expressed in embryo and 3 other cell types or tissues"/>
</dbReference>
<dbReference type="GO" id="GO:0005737">
    <property type="term" value="C:cytoplasm"/>
    <property type="evidence" value="ECO:0000318"/>
    <property type="project" value="GO_Central"/>
</dbReference>
<dbReference type="GO" id="GO:0043231">
    <property type="term" value="C:intracellular membrane-bounded organelle"/>
    <property type="evidence" value="ECO:0000318"/>
    <property type="project" value="GO_Central"/>
</dbReference>
<dbReference type="GO" id="GO:0016018">
    <property type="term" value="F:cyclosporin A binding"/>
    <property type="evidence" value="ECO:0000318"/>
    <property type="project" value="GO_Central"/>
</dbReference>
<dbReference type="GO" id="GO:0003755">
    <property type="term" value="F:peptidyl-prolyl cis-trans isomerase activity"/>
    <property type="evidence" value="ECO:0000318"/>
    <property type="project" value="GO_Central"/>
</dbReference>
<dbReference type="GO" id="GO:0006457">
    <property type="term" value="P:protein folding"/>
    <property type="evidence" value="ECO:0000318"/>
    <property type="project" value="GO_Central"/>
</dbReference>
<dbReference type="FunFam" id="2.40.100.10:FF:000001">
    <property type="entry name" value="Peptidyl-prolyl cis-trans isomerase"/>
    <property type="match status" value="1"/>
</dbReference>
<dbReference type="Gene3D" id="2.40.100.10">
    <property type="entry name" value="Cyclophilin-like"/>
    <property type="match status" value="1"/>
</dbReference>
<dbReference type="InterPro" id="IPR029000">
    <property type="entry name" value="Cyclophilin-like_dom_sf"/>
</dbReference>
<dbReference type="InterPro" id="IPR024936">
    <property type="entry name" value="Cyclophilin-type_PPIase"/>
</dbReference>
<dbReference type="InterPro" id="IPR020892">
    <property type="entry name" value="Cyclophilin-type_PPIase_CS"/>
</dbReference>
<dbReference type="InterPro" id="IPR002130">
    <property type="entry name" value="Cyclophilin-type_PPIase_dom"/>
</dbReference>
<dbReference type="PANTHER" id="PTHR11071">
    <property type="entry name" value="PEPTIDYL-PROLYL CIS-TRANS ISOMERASE"/>
    <property type="match status" value="1"/>
</dbReference>
<dbReference type="PANTHER" id="PTHR11071:SF293">
    <property type="entry name" value="PEPTIDYL-PROLYL CIS-TRANS ISOMERASE 6"/>
    <property type="match status" value="1"/>
</dbReference>
<dbReference type="Pfam" id="PF00160">
    <property type="entry name" value="Pro_isomerase"/>
    <property type="match status" value="1"/>
</dbReference>
<dbReference type="PIRSF" id="PIRSF001467">
    <property type="entry name" value="Peptidylpro_ismrse"/>
    <property type="match status" value="1"/>
</dbReference>
<dbReference type="PRINTS" id="PR00153">
    <property type="entry name" value="CSAPPISMRASE"/>
</dbReference>
<dbReference type="SUPFAM" id="SSF50891">
    <property type="entry name" value="Cyclophilin-like"/>
    <property type="match status" value="1"/>
</dbReference>
<dbReference type="PROSITE" id="PS00170">
    <property type="entry name" value="CSA_PPIASE_1"/>
    <property type="match status" value="1"/>
</dbReference>
<dbReference type="PROSITE" id="PS50072">
    <property type="entry name" value="CSA_PPIASE_2"/>
    <property type="match status" value="1"/>
</dbReference>